<gene>
    <name evidence="1" type="primary">metK</name>
    <name type="ordered locus">Syncc9902_1869</name>
</gene>
<reference key="1">
    <citation type="submission" date="2005-08" db="EMBL/GenBank/DDBJ databases">
        <title>Complete sequence of Synechococcus sp. CC9902.</title>
        <authorList>
            <person name="Copeland A."/>
            <person name="Lucas S."/>
            <person name="Lapidus A."/>
            <person name="Barry K."/>
            <person name="Detter J.C."/>
            <person name="Glavina T."/>
            <person name="Hammon N."/>
            <person name="Israni S."/>
            <person name="Pitluck S."/>
            <person name="Martinez M."/>
            <person name="Schmutz J."/>
            <person name="Larimer F."/>
            <person name="Land M."/>
            <person name="Kyrpides N."/>
            <person name="Ivanova N."/>
            <person name="Richardson P."/>
        </authorList>
    </citation>
    <scope>NUCLEOTIDE SEQUENCE [LARGE SCALE GENOMIC DNA]</scope>
    <source>
        <strain>CC9902</strain>
    </source>
</reference>
<name>METK_SYNS9</name>
<feature type="chain" id="PRO_0000241048" description="S-adenosylmethionine synthase">
    <location>
        <begin position="1"/>
        <end position="408"/>
    </location>
</feature>
<feature type="region of interest" description="Flexible loop" evidence="1">
    <location>
        <begin position="100"/>
        <end position="110"/>
    </location>
</feature>
<feature type="binding site" description="in other chain" evidence="1">
    <location>
        <position position="15"/>
    </location>
    <ligand>
        <name>ATP</name>
        <dbReference type="ChEBI" id="CHEBI:30616"/>
        <note>ligand shared between two neighboring subunits</note>
    </ligand>
</feature>
<feature type="binding site" evidence="1">
    <location>
        <position position="17"/>
    </location>
    <ligand>
        <name>Mg(2+)</name>
        <dbReference type="ChEBI" id="CHEBI:18420"/>
    </ligand>
</feature>
<feature type="binding site" evidence="1">
    <location>
        <position position="43"/>
    </location>
    <ligand>
        <name>K(+)</name>
        <dbReference type="ChEBI" id="CHEBI:29103"/>
    </ligand>
</feature>
<feature type="binding site" description="in other chain" evidence="1">
    <location>
        <position position="56"/>
    </location>
    <ligand>
        <name>L-methionine</name>
        <dbReference type="ChEBI" id="CHEBI:57844"/>
        <note>ligand shared between two neighboring subunits</note>
    </ligand>
</feature>
<feature type="binding site" description="in other chain" evidence="1">
    <location>
        <position position="100"/>
    </location>
    <ligand>
        <name>L-methionine</name>
        <dbReference type="ChEBI" id="CHEBI:57844"/>
        <note>ligand shared between two neighboring subunits</note>
    </ligand>
</feature>
<feature type="binding site" description="in other chain" evidence="1">
    <location>
        <begin position="171"/>
        <end position="173"/>
    </location>
    <ligand>
        <name>ATP</name>
        <dbReference type="ChEBI" id="CHEBI:30616"/>
        <note>ligand shared between two neighboring subunits</note>
    </ligand>
</feature>
<feature type="binding site" description="in other chain" evidence="1">
    <location>
        <begin position="248"/>
        <end position="249"/>
    </location>
    <ligand>
        <name>ATP</name>
        <dbReference type="ChEBI" id="CHEBI:30616"/>
        <note>ligand shared between two neighboring subunits</note>
    </ligand>
</feature>
<feature type="binding site" evidence="1">
    <location>
        <position position="257"/>
    </location>
    <ligand>
        <name>ATP</name>
        <dbReference type="ChEBI" id="CHEBI:30616"/>
        <note>ligand shared between two neighboring subunits</note>
    </ligand>
</feature>
<feature type="binding site" evidence="1">
    <location>
        <position position="257"/>
    </location>
    <ligand>
        <name>L-methionine</name>
        <dbReference type="ChEBI" id="CHEBI:57844"/>
        <note>ligand shared between two neighboring subunits</note>
    </ligand>
</feature>
<feature type="binding site" description="in other chain" evidence="1">
    <location>
        <begin position="263"/>
        <end position="264"/>
    </location>
    <ligand>
        <name>ATP</name>
        <dbReference type="ChEBI" id="CHEBI:30616"/>
        <note>ligand shared between two neighboring subunits</note>
    </ligand>
</feature>
<feature type="binding site" evidence="1">
    <location>
        <position position="280"/>
    </location>
    <ligand>
        <name>ATP</name>
        <dbReference type="ChEBI" id="CHEBI:30616"/>
        <note>ligand shared between two neighboring subunits</note>
    </ligand>
</feature>
<feature type="binding site" evidence="1">
    <location>
        <position position="284"/>
    </location>
    <ligand>
        <name>ATP</name>
        <dbReference type="ChEBI" id="CHEBI:30616"/>
        <note>ligand shared between two neighboring subunits</note>
    </ligand>
</feature>
<feature type="binding site" description="in other chain" evidence="1">
    <location>
        <position position="288"/>
    </location>
    <ligand>
        <name>L-methionine</name>
        <dbReference type="ChEBI" id="CHEBI:57844"/>
        <note>ligand shared between two neighboring subunits</note>
    </ligand>
</feature>
<evidence type="ECO:0000255" key="1">
    <source>
        <dbReference type="HAMAP-Rule" id="MF_00086"/>
    </source>
</evidence>
<accession>Q3AWE6</accession>
<sequence>MSRYVFTSESVTEGHPDKICDQVSDAVLDALLAQDPASRVACETVVNTGLCMITGEVTSKAKVDFIHLVRDVIKEIGYSGARAGGFDANSCAVLVALDQQSPDIAQGVNEADDHAGDPLDLVGAGDQGIMFGYACNETPELMPLPISLAHRLARQLAEVRHNGTLDYLLPDGKTQVSVVYENDQPVAIDTILISTQHTAEVGGMSDEQGIRERITEDLWTHVVEPATADLNLKPSREGTKYLVNPTGKFVVGGPQGDAGLTGRKIIVDTYGGYARHGGGAFSGKDPTKVDRSAAYAARFVAKALVASGLAGRAEVQLSYAIGVAKPVSILVESFGTGTVSNEDLTALVQEHFDLRPGAIIENFGLRNLPQARGGRFYQNTAAYGHFGRNDLNLPWEDVAAKAEELRKA</sequence>
<keyword id="KW-0067">ATP-binding</keyword>
<keyword id="KW-0963">Cytoplasm</keyword>
<keyword id="KW-0460">Magnesium</keyword>
<keyword id="KW-0479">Metal-binding</keyword>
<keyword id="KW-0547">Nucleotide-binding</keyword>
<keyword id="KW-0554">One-carbon metabolism</keyword>
<keyword id="KW-0630">Potassium</keyword>
<keyword id="KW-1185">Reference proteome</keyword>
<keyword id="KW-0808">Transferase</keyword>
<protein>
    <recommendedName>
        <fullName evidence="1">S-adenosylmethionine synthase</fullName>
        <shortName evidence="1">AdoMet synthase</shortName>
        <ecNumber evidence="1">2.5.1.6</ecNumber>
    </recommendedName>
    <alternativeName>
        <fullName evidence="1">MAT</fullName>
    </alternativeName>
    <alternativeName>
        <fullName evidence="1">Methionine adenosyltransferase</fullName>
    </alternativeName>
</protein>
<comment type="function">
    <text evidence="1">Catalyzes the formation of S-adenosylmethionine (AdoMet) from methionine and ATP. The overall synthetic reaction is composed of two sequential steps, AdoMet formation and the subsequent tripolyphosphate hydrolysis which occurs prior to release of AdoMet from the enzyme.</text>
</comment>
<comment type="catalytic activity">
    <reaction evidence="1">
        <text>L-methionine + ATP + H2O = S-adenosyl-L-methionine + phosphate + diphosphate</text>
        <dbReference type="Rhea" id="RHEA:21080"/>
        <dbReference type="ChEBI" id="CHEBI:15377"/>
        <dbReference type="ChEBI" id="CHEBI:30616"/>
        <dbReference type="ChEBI" id="CHEBI:33019"/>
        <dbReference type="ChEBI" id="CHEBI:43474"/>
        <dbReference type="ChEBI" id="CHEBI:57844"/>
        <dbReference type="ChEBI" id="CHEBI:59789"/>
        <dbReference type="EC" id="2.5.1.6"/>
    </reaction>
</comment>
<comment type="cofactor">
    <cofactor evidence="1">
        <name>Mg(2+)</name>
        <dbReference type="ChEBI" id="CHEBI:18420"/>
    </cofactor>
    <text evidence="1">Binds 2 divalent ions per subunit.</text>
</comment>
<comment type="cofactor">
    <cofactor evidence="1">
        <name>K(+)</name>
        <dbReference type="ChEBI" id="CHEBI:29103"/>
    </cofactor>
    <text evidence="1">Binds 1 potassium ion per subunit.</text>
</comment>
<comment type="pathway">
    <text evidence="1">Amino-acid biosynthesis; S-adenosyl-L-methionine biosynthesis; S-adenosyl-L-methionine from L-methionine: step 1/1.</text>
</comment>
<comment type="subunit">
    <text evidence="1">Homotetramer; dimer of dimers.</text>
</comment>
<comment type="subcellular location">
    <subcellularLocation>
        <location evidence="1">Cytoplasm</location>
    </subcellularLocation>
</comment>
<comment type="similarity">
    <text evidence="1">Belongs to the AdoMet synthase family.</text>
</comment>
<dbReference type="EC" id="2.5.1.6" evidence="1"/>
<dbReference type="EMBL" id="CP000097">
    <property type="protein sequence ID" value="ABB26826.1"/>
    <property type="molecule type" value="Genomic_DNA"/>
</dbReference>
<dbReference type="RefSeq" id="WP_011360628.1">
    <property type="nucleotide sequence ID" value="NC_007513.1"/>
</dbReference>
<dbReference type="SMR" id="Q3AWE6"/>
<dbReference type="STRING" id="316279.Syncc9902_1869"/>
<dbReference type="KEGG" id="sye:Syncc9902_1869"/>
<dbReference type="eggNOG" id="COG0192">
    <property type="taxonomic scope" value="Bacteria"/>
</dbReference>
<dbReference type="HOGENOM" id="CLU_041802_1_1_3"/>
<dbReference type="OrthoDB" id="9801686at2"/>
<dbReference type="UniPathway" id="UPA00315">
    <property type="reaction ID" value="UER00080"/>
</dbReference>
<dbReference type="Proteomes" id="UP000002712">
    <property type="component" value="Chromosome"/>
</dbReference>
<dbReference type="GO" id="GO:0005737">
    <property type="term" value="C:cytoplasm"/>
    <property type="evidence" value="ECO:0007669"/>
    <property type="project" value="UniProtKB-SubCell"/>
</dbReference>
<dbReference type="GO" id="GO:0005524">
    <property type="term" value="F:ATP binding"/>
    <property type="evidence" value="ECO:0007669"/>
    <property type="project" value="UniProtKB-UniRule"/>
</dbReference>
<dbReference type="GO" id="GO:0000287">
    <property type="term" value="F:magnesium ion binding"/>
    <property type="evidence" value="ECO:0007669"/>
    <property type="project" value="UniProtKB-UniRule"/>
</dbReference>
<dbReference type="GO" id="GO:0004478">
    <property type="term" value="F:methionine adenosyltransferase activity"/>
    <property type="evidence" value="ECO:0007669"/>
    <property type="project" value="UniProtKB-UniRule"/>
</dbReference>
<dbReference type="GO" id="GO:0006730">
    <property type="term" value="P:one-carbon metabolic process"/>
    <property type="evidence" value="ECO:0007669"/>
    <property type="project" value="UniProtKB-KW"/>
</dbReference>
<dbReference type="GO" id="GO:0006556">
    <property type="term" value="P:S-adenosylmethionine biosynthetic process"/>
    <property type="evidence" value="ECO:0007669"/>
    <property type="project" value="UniProtKB-UniRule"/>
</dbReference>
<dbReference type="CDD" id="cd18079">
    <property type="entry name" value="S-AdoMet_synt"/>
    <property type="match status" value="1"/>
</dbReference>
<dbReference type="FunFam" id="3.30.300.10:FF:000003">
    <property type="entry name" value="S-adenosylmethionine synthase"/>
    <property type="match status" value="1"/>
</dbReference>
<dbReference type="Gene3D" id="3.30.300.10">
    <property type="match status" value="3"/>
</dbReference>
<dbReference type="HAMAP" id="MF_00086">
    <property type="entry name" value="S_AdoMet_synth1"/>
    <property type="match status" value="1"/>
</dbReference>
<dbReference type="InterPro" id="IPR022631">
    <property type="entry name" value="ADOMET_SYNTHASE_CS"/>
</dbReference>
<dbReference type="InterPro" id="IPR022630">
    <property type="entry name" value="S-AdoMet_synt_C"/>
</dbReference>
<dbReference type="InterPro" id="IPR022629">
    <property type="entry name" value="S-AdoMet_synt_central"/>
</dbReference>
<dbReference type="InterPro" id="IPR022628">
    <property type="entry name" value="S-AdoMet_synt_N"/>
</dbReference>
<dbReference type="InterPro" id="IPR002133">
    <property type="entry name" value="S-AdoMet_synthetase"/>
</dbReference>
<dbReference type="InterPro" id="IPR022636">
    <property type="entry name" value="S-AdoMet_synthetase_sfam"/>
</dbReference>
<dbReference type="NCBIfam" id="TIGR01034">
    <property type="entry name" value="metK"/>
    <property type="match status" value="1"/>
</dbReference>
<dbReference type="PANTHER" id="PTHR11964">
    <property type="entry name" value="S-ADENOSYLMETHIONINE SYNTHETASE"/>
    <property type="match status" value="1"/>
</dbReference>
<dbReference type="Pfam" id="PF02773">
    <property type="entry name" value="S-AdoMet_synt_C"/>
    <property type="match status" value="1"/>
</dbReference>
<dbReference type="Pfam" id="PF02772">
    <property type="entry name" value="S-AdoMet_synt_M"/>
    <property type="match status" value="1"/>
</dbReference>
<dbReference type="Pfam" id="PF00438">
    <property type="entry name" value="S-AdoMet_synt_N"/>
    <property type="match status" value="1"/>
</dbReference>
<dbReference type="PIRSF" id="PIRSF000497">
    <property type="entry name" value="MAT"/>
    <property type="match status" value="1"/>
</dbReference>
<dbReference type="SUPFAM" id="SSF55973">
    <property type="entry name" value="S-adenosylmethionine synthetase"/>
    <property type="match status" value="3"/>
</dbReference>
<dbReference type="PROSITE" id="PS00376">
    <property type="entry name" value="ADOMET_SYNTHASE_1"/>
    <property type="match status" value="1"/>
</dbReference>
<dbReference type="PROSITE" id="PS00377">
    <property type="entry name" value="ADOMET_SYNTHASE_2"/>
    <property type="match status" value="1"/>
</dbReference>
<organism>
    <name type="scientific">Synechococcus sp. (strain CC9902)</name>
    <dbReference type="NCBI Taxonomy" id="316279"/>
    <lineage>
        <taxon>Bacteria</taxon>
        <taxon>Bacillati</taxon>
        <taxon>Cyanobacteriota</taxon>
        <taxon>Cyanophyceae</taxon>
        <taxon>Synechococcales</taxon>
        <taxon>Synechococcaceae</taxon>
        <taxon>Synechococcus</taxon>
    </lineage>
</organism>
<proteinExistence type="inferred from homology"/>